<organism>
    <name type="scientific">Sulfolobus acidocaldarius (strain ATCC 33909 / DSM 639 / JCM 8929 / NBRC 15157 / NCIMB 11770)</name>
    <dbReference type="NCBI Taxonomy" id="330779"/>
    <lineage>
        <taxon>Archaea</taxon>
        <taxon>Thermoproteota</taxon>
        <taxon>Thermoprotei</taxon>
        <taxon>Sulfolobales</taxon>
        <taxon>Sulfolobaceae</taxon>
        <taxon>Sulfolobus</taxon>
    </lineage>
</organism>
<keyword id="KW-0002">3D-structure</keyword>
<keyword id="KW-0963">Cytoplasm</keyword>
<keyword id="KW-0903">Direct protein sequencing</keyword>
<keyword id="KW-0238">DNA-binding</keyword>
<keyword id="KW-0488">Methylation</keyword>
<keyword id="KW-1185">Reference proteome</keyword>
<gene>
    <name type="ordered locus">Saci_0064</name>
</gene>
<sequence length="66" mass="7609">MVKVKFKYKGEEKEVDTSKIKKVWRVGKMVSFTYDDNGKTGRGAVSEKDAPKELLDMLARAEREKK</sequence>
<proteinExistence type="evidence at protein level"/>
<reference key="1">
    <citation type="journal article" date="1995" name="Biochemistry">
        <title>Gene cloning, expression, and characterization of the Sac7 proteins from the hyperthermophile Sulfolobus acidocaldarius.</title>
        <authorList>
            <person name="McAfee J.G."/>
            <person name="Edmondson S.P."/>
            <person name="Datta P.K."/>
            <person name="Shriver J.W."/>
            <person name="Gupta R."/>
        </authorList>
    </citation>
    <scope>NUCLEOTIDE SEQUENCE [GENOMIC DNA]</scope>
    <scope>DNA-BINDING</scope>
</reference>
<reference key="2">
    <citation type="journal article" date="2005" name="J. Bacteriol.">
        <title>The genome of Sulfolobus acidocaldarius, a model organism of the Crenarchaeota.</title>
        <authorList>
            <person name="Chen L."/>
            <person name="Bruegger K."/>
            <person name="Skovgaard M."/>
            <person name="Redder P."/>
            <person name="She Q."/>
            <person name="Torarinsson E."/>
            <person name="Greve B."/>
            <person name="Awayez M."/>
            <person name="Zibat A."/>
            <person name="Klenk H.-P."/>
            <person name="Garrett R.A."/>
        </authorList>
    </citation>
    <scope>NUCLEOTIDE SEQUENCE [LARGE SCALE GENOMIC DNA]</scope>
    <source>
        <strain>ATCC 33909 / DSM 639 / JCM 8929 / NBRC 15157 / NCIMB 11770</strain>
    </source>
</reference>
<reference key="3">
    <citation type="journal article" date="1984" name="FEBS Lett.">
        <title>The amino acid sequence of a small DNA binding protein from the archaebacterium Sulfolobus solfataricus.</title>
        <authorList>
            <person name="Kimura M."/>
            <person name="Kimura J."/>
            <person name="Davie P."/>
            <person name="Reinhardt R."/>
            <person name="Dijk J."/>
        </authorList>
    </citation>
    <scope>PROTEIN SEQUENCE OF 2-65</scope>
</reference>
<reference key="4">
    <citation type="journal article" date="1988" name="J. Biol. Chem.">
        <title>Microsequence analysis of DNA-binding proteins 7a, 7b, and 7e from the archaebacterium Sulfolobus acidocaldarius.</title>
        <authorList>
            <person name="Choli T."/>
            <person name="Wittmann-Liebold B."/>
            <person name="Reinhardt R."/>
        </authorList>
    </citation>
    <scope>PROTEIN SEQUENCE OF 2-62</scope>
    <scope>METHYLATION AT LYS-5 AND LYS-7</scope>
</reference>
<reference key="5">
    <citation type="journal article" date="2016" name="Sci. Rep.">
        <title>The archaeal '7 kDa DNA-binding' proteins: extended characterization of an old gifted family.</title>
        <authorList>
            <person name="Kalichuk V."/>
            <person name="Behar G."/>
            <person name="Renodon-Corniere A."/>
            <person name="Danovski G."/>
            <person name="Obal G."/>
            <person name="Barbet J."/>
            <person name="Mouratou B."/>
            <person name="Pecorari F."/>
        </authorList>
    </citation>
    <scope>DNA-BINDING</scope>
    <scope>BIOPHYSICOCHEMICAL PROPERTIES</scope>
    <scope>SUBUNIT</scope>
    <scope>SUBCELLULAR LOCATION</scope>
</reference>
<reference key="6">
    <citation type="journal article" date="1995" name="Biochemistry">
        <title>Solution structure of the DNA-binding protein Sac7d from the hyperthermophile Sulfolobus acidocaldarius.</title>
        <authorList>
            <person name="Edmondson S.P."/>
            <person name="Qiu L."/>
            <person name="Shriver J.W."/>
        </authorList>
    </citation>
    <scope>STRUCTURE BY NMR</scope>
</reference>
<reference key="7">
    <citation type="journal article" date="1998" name="Nature">
        <title>The hyperthermophile chromosomal protein Sac7d sharply kinks DNA.</title>
        <authorList>
            <person name="Robinson H."/>
            <person name="Gao Y.-G."/>
            <person name="McCrary B.S."/>
            <person name="Edmondson S.P."/>
            <person name="Shriver J.W."/>
            <person name="Wang A.H.-J."/>
        </authorList>
    </citation>
    <scope>X-RAY CRYSTALLOGRAPHY (1.6 ANGSTROMS)</scope>
    <scope>DNA-BINDING</scope>
</reference>
<accession>P13123</accession>
<accession>Q4JCI7</accession>
<comment type="function">
    <text evidence="1">Can constrain negative DNA supercoils. May be involved in maintaining the integrity of the genome at high temperature.</text>
</comment>
<comment type="biophysicochemical properties">
    <phDependence>
        <text evidence="2">Highly stable from pH 0 to pH 12.</text>
    </phDependence>
    <temperatureDependence>
        <text evidence="2">Hyperthermostable.</text>
    </temperatureDependence>
</comment>
<comment type="subunit">
    <text evidence="2">Monomer.</text>
</comment>
<comment type="subcellular location">
    <subcellularLocation>
        <location evidence="2">Cytoplasm</location>
    </subcellularLocation>
</comment>
<comment type="PTM">
    <text evidence="3">Lys-5 was 70% monomethylated in form 7a, 25% in form 7b, and 20% in form 7d. Lys-7 was 50% monomethylated in form 7a, 40% in form 7b, and 50% in form 7d.</text>
</comment>
<comment type="miscellaneous">
    <text evidence="6">Sac7a and Sac7b are truncated versions of the Sac7d protein, most likely resulting from post-translational processing, or degradation during isolation.</text>
</comment>
<comment type="similarity">
    <text evidence="5">Belongs to the 7 kDa DNA-binding/endoribonuclease P2 family.</text>
</comment>
<protein>
    <recommendedName>
        <fullName evidence="5">DNA-binding protein 7d</fullName>
    </recommendedName>
    <alternativeName>
        <fullName>7 kDa DNA-binding protein d</fullName>
    </alternativeName>
    <alternativeName>
        <fullName>Sac7d</fullName>
    </alternativeName>
    <component>
        <recommendedName>
            <fullName>DNA-binding protein 7a</fullName>
        </recommendedName>
        <alternativeName>
            <fullName>7 kDa DNA-binding protein a</fullName>
        </alternativeName>
        <alternativeName>
            <fullName>Sac7a</fullName>
        </alternativeName>
    </component>
    <component>
        <recommendedName>
            <fullName>DNA-binding protein 7b</fullName>
        </recommendedName>
        <alternativeName>
            <fullName>7 kDa DNA-binding protein b</fullName>
        </alternativeName>
        <alternativeName>
            <fullName>Sac7b</fullName>
        </alternativeName>
    </component>
</protein>
<feature type="initiator methionine" description="Removed" evidence="3 4">
    <location>
        <position position="1"/>
    </location>
</feature>
<feature type="chain" id="PRO_0000007248" description="DNA-binding protein 7d">
    <location>
        <begin position="2"/>
        <end position="65"/>
    </location>
</feature>
<feature type="chain" id="PRO_0000007249" description="DNA-binding protein 7a">
    <location>
        <begin position="2"/>
        <end position="62"/>
    </location>
</feature>
<feature type="chain" id="PRO_0000007250" description="DNA-binding protein 7b">
    <location>
        <begin position="2"/>
        <end position="59"/>
    </location>
</feature>
<feature type="modified residue" description="N6-methyllysine; partial" evidence="3">
    <location>
        <position position="5"/>
    </location>
</feature>
<feature type="modified residue" description="N6-methyllysine; partial" evidence="3">
    <location>
        <position position="7"/>
    </location>
</feature>
<feature type="strand" evidence="7">
    <location>
        <begin position="3"/>
        <end position="8"/>
    </location>
</feature>
<feature type="strand" evidence="7">
    <location>
        <begin position="11"/>
        <end position="16"/>
    </location>
</feature>
<feature type="helix" evidence="7">
    <location>
        <begin position="17"/>
        <end position="19"/>
    </location>
</feature>
<feature type="strand" evidence="7">
    <location>
        <begin position="20"/>
        <end position="26"/>
    </location>
</feature>
<feature type="strand" evidence="7">
    <location>
        <begin position="29"/>
        <end position="36"/>
    </location>
</feature>
<feature type="strand" evidence="7">
    <location>
        <begin position="39"/>
        <end position="46"/>
    </location>
</feature>
<feature type="helix" evidence="7">
    <location>
        <begin position="47"/>
        <end position="49"/>
    </location>
</feature>
<feature type="helix" evidence="7">
    <location>
        <begin position="52"/>
        <end position="62"/>
    </location>
</feature>
<evidence type="ECO:0000250" key="1">
    <source>
        <dbReference type="UniProtKB" id="P61990"/>
    </source>
</evidence>
<evidence type="ECO:0000269" key="2">
    <source>
    </source>
</evidence>
<evidence type="ECO:0000269" key="3">
    <source>
    </source>
</evidence>
<evidence type="ECO:0000269" key="4">
    <source>
    </source>
</evidence>
<evidence type="ECO:0000305" key="5"/>
<evidence type="ECO:0000305" key="6">
    <source>
    </source>
</evidence>
<evidence type="ECO:0007829" key="7">
    <source>
        <dbReference type="PDB" id="1XYI"/>
    </source>
</evidence>
<name>DN7D_SULAC</name>
<dbReference type="EMBL" id="M87569">
    <property type="protein sequence ID" value="AAA80315.1"/>
    <property type="molecule type" value="Genomic_DNA"/>
</dbReference>
<dbReference type="EMBL" id="CP000077">
    <property type="protein sequence ID" value="AAY79492.1"/>
    <property type="molecule type" value="Genomic_DNA"/>
</dbReference>
<dbReference type="PIR" id="A27749">
    <property type="entry name" value="A27749"/>
</dbReference>
<dbReference type="RefSeq" id="WP_011276993.1">
    <property type="nucleotide sequence ID" value="NC_007181.1"/>
</dbReference>
<dbReference type="PDB" id="1AZP">
    <property type="method" value="X-ray"/>
    <property type="resolution" value="1.60 A"/>
    <property type="chains" value="A=1-66"/>
</dbReference>
<dbReference type="PDB" id="1AZQ">
    <property type="method" value="X-ray"/>
    <property type="resolution" value="1.94 A"/>
    <property type="chains" value="A=1-66"/>
</dbReference>
<dbReference type="PDB" id="1BF4">
    <property type="method" value="X-ray"/>
    <property type="resolution" value="1.60 A"/>
    <property type="chains" value="A=4-66"/>
</dbReference>
<dbReference type="PDB" id="1CA5">
    <property type="method" value="X-ray"/>
    <property type="resolution" value="2.20 A"/>
    <property type="chains" value="A=1-66"/>
</dbReference>
<dbReference type="PDB" id="1CA6">
    <property type="method" value="X-ray"/>
    <property type="resolution" value="2.20 A"/>
    <property type="chains" value="A=1-66"/>
</dbReference>
<dbReference type="PDB" id="1SAP">
    <property type="method" value="NMR"/>
    <property type="chains" value="A=1-66"/>
</dbReference>
<dbReference type="PDB" id="1WD0">
    <property type="method" value="X-ray"/>
    <property type="resolution" value="1.90 A"/>
    <property type="chains" value="A=1-66"/>
</dbReference>
<dbReference type="PDB" id="1WD1">
    <property type="method" value="X-ray"/>
    <property type="resolution" value="2.20 A"/>
    <property type="chains" value="A=1-66"/>
</dbReference>
<dbReference type="PDB" id="1WTO">
    <property type="method" value="X-ray"/>
    <property type="resolution" value="1.50 A"/>
    <property type="chains" value="A=1-66"/>
</dbReference>
<dbReference type="PDB" id="1WTP">
    <property type="method" value="X-ray"/>
    <property type="resolution" value="1.90 A"/>
    <property type="chains" value="A/B=1-66"/>
</dbReference>
<dbReference type="PDB" id="1WTQ">
    <property type="method" value="X-ray"/>
    <property type="resolution" value="1.70 A"/>
    <property type="chains" value="A=1-66"/>
</dbReference>
<dbReference type="PDB" id="1WTR">
    <property type="method" value="X-ray"/>
    <property type="resolution" value="1.80 A"/>
    <property type="chains" value="A=1-66"/>
</dbReference>
<dbReference type="PDB" id="1WTV">
    <property type="method" value="X-ray"/>
    <property type="resolution" value="1.60 A"/>
    <property type="chains" value="A=1-66"/>
</dbReference>
<dbReference type="PDB" id="1WTW">
    <property type="method" value="X-ray"/>
    <property type="resolution" value="2.20 A"/>
    <property type="chains" value="A=1-66"/>
</dbReference>
<dbReference type="PDB" id="1WTX">
    <property type="method" value="X-ray"/>
    <property type="resolution" value="2.20 A"/>
    <property type="chains" value="A=1-66"/>
</dbReference>
<dbReference type="PDB" id="1WVL">
    <property type="method" value="X-ray"/>
    <property type="resolution" value="2.60 A"/>
    <property type="chains" value="A/B=1-66"/>
</dbReference>
<dbReference type="PDB" id="1XX8">
    <property type="method" value="NMR"/>
    <property type="chains" value="A=1-66"/>
</dbReference>
<dbReference type="PDB" id="1XYI">
    <property type="method" value="X-ray"/>
    <property type="resolution" value="1.45 A"/>
    <property type="chains" value="A=1-66"/>
</dbReference>
<dbReference type="PDB" id="2XIW">
    <property type="method" value="X-ray"/>
    <property type="resolution" value="1.50 A"/>
    <property type="chains" value="A/B=2-66"/>
</dbReference>
<dbReference type="PDB" id="4CJ1">
    <property type="method" value="X-ray"/>
    <property type="resolution" value="1.63 A"/>
    <property type="chains" value="B=2-62"/>
</dbReference>
<dbReference type="PDB" id="4CJ2">
    <property type="method" value="X-ray"/>
    <property type="resolution" value="1.50 A"/>
    <property type="chains" value="C/D=2-66"/>
</dbReference>
<dbReference type="PDB" id="8CMN">
    <property type="method" value="X-ray"/>
    <property type="resolution" value="2.65 A"/>
    <property type="chains" value="AA=1-66"/>
</dbReference>
<dbReference type="PDB" id="8Q2M">
    <property type="method" value="X-ray"/>
    <property type="resolution" value="3.21 A"/>
    <property type="chains" value="AA=1-66"/>
</dbReference>
<dbReference type="PDB" id="8QPC">
    <property type="method" value="X-ray"/>
    <property type="resolution" value="3.24 A"/>
    <property type="chains" value="AA=1-66"/>
</dbReference>
<dbReference type="PDBsum" id="1AZP"/>
<dbReference type="PDBsum" id="1AZQ"/>
<dbReference type="PDBsum" id="1BF4"/>
<dbReference type="PDBsum" id="1CA5"/>
<dbReference type="PDBsum" id="1CA6"/>
<dbReference type="PDBsum" id="1SAP"/>
<dbReference type="PDBsum" id="1WD0"/>
<dbReference type="PDBsum" id="1WD1"/>
<dbReference type="PDBsum" id="1WTO"/>
<dbReference type="PDBsum" id="1WTP"/>
<dbReference type="PDBsum" id="1WTQ"/>
<dbReference type="PDBsum" id="1WTR"/>
<dbReference type="PDBsum" id="1WTV"/>
<dbReference type="PDBsum" id="1WTW"/>
<dbReference type="PDBsum" id="1WTX"/>
<dbReference type="PDBsum" id="1WVL"/>
<dbReference type="PDBsum" id="1XX8"/>
<dbReference type="PDBsum" id="1XYI"/>
<dbReference type="PDBsum" id="2XIW"/>
<dbReference type="PDBsum" id="4CJ1"/>
<dbReference type="PDBsum" id="4CJ2"/>
<dbReference type="PDBsum" id="8CMN"/>
<dbReference type="PDBsum" id="8Q2M"/>
<dbReference type="PDBsum" id="8QPC"/>
<dbReference type="BMRB" id="P13123"/>
<dbReference type="SMR" id="P13123"/>
<dbReference type="STRING" id="330779.Saci_0064"/>
<dbReference type="iPTMnet" id="P13123"/>
<dbReference type="GeneID" id="14550595"/>
<dbReference type="KEGG" id="sai:Saci_0064"/>
<dbReference type="PATRIC" id="fig|330779.12.peg.59"/>
<dbReference type="eggNOG" id="arCOG05888">
    <property type="taxonomic scope" value="Archaea"/>
</dbReference>
<dbReference type="HOGENOM" id="CLU_2929990_0_0_2"/>
<dbReference type="EvolutionaryTrace" id="P13123"/>
<dbReference type="Proteomes" id="UP000001018">
    <property type="component" value="Chromosome"/>
</dbReference>
<dbReference type="GO" id="GO:0005737">
    <property type="term" value="C:cytoplasm"/>
    <property type="evidence" value="ECO:0007669"/>
    <property type="project" value="UniProtKB-SubCell"/>
</dbReference>
<dbReference type="GO" id="GO:0003677">
    <property type="term" value="F:DNA binding"/>
    <property type="evidence" value="ECO:0007669"/>
    <property type="project" value="UniProtKB-KW"/>
</dbReference>
<dbReference type="GO" id="GO:0004521">
    <property type="term" value="F:RNA endonuclease activity"/>
    <property type="evidence" value="ECO:0007669"/>
    <property type="project" value="InterPro"/>
</dbReference>
<dbReference type="Gene3D" id="2.40.50.40">
    <property type="match status" value="1"/>
</dbReference>
<dbReference type="InterPro" id="IPR016197">
    <property type="entry name" value="Chromo-like_dom_sf"/>
</dbReference>
<dbReference type="InterPro" id="IPR003212">
    <property type="entry name" value="DNA-bd_7a-e_arc"/>
</dbReference>
<dbReference type="NCBIfam" id="NF045555">
    <property type="entry name" value="Sul7d"/>
    <property type="match status" value="1"/>
</dbReference>
<dbReference type="Pfam" id="PF02294">
    <property type="entry name" value="7kD_DNA_binding"/>
    <property type="match status" value="1"/>
</dbReference>
<dbReference type="PIRSF" id="PIRSF036912">
    <property type="entry name" value="Sac7"/>
    <property type="match status" value="1"/>
</dbReference>
<dbReference type="SUPFAM" id="SSF54160">
    <property type="entry name" value="Chromo domain-like"/>
    <property type="match status" value="1"/>
</dbReference>